<evidence type="ECO:0000255" key="1">
    <source>
        <dbReference type="HAMAP-Rule" id="MF_01333"/>
    </source>
</evidence>
<evidence type="ECO:0000305" key="2"/>
<name>RL5_RHOPT</name>
<keyword id="KW-0687">Ribonucleoprotein</keyword>
<keyword id="KW-0689">Ribosomal protein</keyword>
<keyword id="KW-0694">RNA-binding</keyword>
<keyword id="KW-0699">rRNA-binding</keyword>
<keyword id="KW-0820">tRNA-binding</keyword>
<reference key="1">
    <citation type="submission" date="2008-05" db="EMBL/GenBank/DDBJ databases">
        <title>Complete sequence of Rhodopseudomonas palustris TIE-1.</title>
        <authorList>
            <consortium name="US DOE Joint Genome Institute"/>
            <person name="Lucas S."/>
            <person name="Copeland A."/>
            <person name="Lapidus A."/>
            <person name="Glavina del Rio T."/>
            <person name="Dalin E."/>
            <person name="Tice H."/>
            <person name="Pitluck S."/>
            <person name="Chain P."/>
            <person name="Malfatti S."/>
            <person name="Shin M."/>
            <person name="Vergez L."/>
            <person name="Lang D."/>
            <person name="Schmutz J."/>
            <person name="Larimer F."/>
            <person name="Land M."/>
            <person name="Hauser L."/>
            <person name="Kyrpides N."/>
            <person name="Mikhailova N."/>
            <person name="Emerson D."/>
            <person name="Newman D.K."/>
            <person name="Roden E."/>
            <person name="Richardson P."/>
        </authorList>
    </citation>
    <scope>NUCLEOTIDE SEQUENCE [LARGE SCALE GENOMIC DNA]</scope>
    <source>
        <strain>TIE-1</strain>
    </source>
</reference>
<sequence>MAETAYVPRLRTEYDRHIRTQLTEKFGYANVMQVPKLDKVVLNMGVGEAVNDRKKAEQAAADLSLIAGQKAVITYSRVAISTFKLRENQPIGCKVTLRQARMYEFIDRLITVALPRVRDFRGLNPKSFDGRGNYSLGIKEHIIFPEIDFDKTGESWGMDITVCTTARTDDEARALLTAFNFPFRQ</sequence>
<dbReference type="EMBL" id="CP001096">
    <property type="protein sequence ID" value="ACF02155.1"/>
    <property type="molecule type" value="Genomic_DNA"/>
</dbReference>
<dbReference type="RefSeq" id="WP_011158783.1">
    <property type="nucleotide sequence ID" value="NC_011004.1"/>
</dbReference>
<dbReference type="SMR" id="B3QBW8"/>
<dbReference type="GeneID" id="66894324"/>
<dbReference type="KEGG" id="rpt:Rpal_3655"/>
<dbReference type="HOGENOM" id="CLU_061015_2_1_5"/>
<dbReference type="OrthoDB" id="9806626at2"/>
<dbReference type="Proteomes" id="UP000001725">
    <property type="component" value="Chromosome"/>
</dbReference>
<dbReference type="GO" id="GO:1990904">
    <property type="term" value="C:ribonucleoprotein complex"/>
    <property type="evidence" value="ECO:0007669"/>
    <property type="project" value="UniProtKB-KW"/>
</dbReference>
<dbReference type="GO" id="GO:0005840">
    <property type="term" value="C:ribosome"/>
    <property type="evidence" value="ECO:0007669"/>
    <property type="project" value="UniProtKB-KW"/>
</dbReference>
<dbReference type="GO" id="GO:0019843">
    <property type="term" value="F:rRNA binding"/>
    <property type="evidence" value="ECO:0007669"/>
    <property type="project" value="UniProtKB-UniRule"/>
</dbReference>
<dbReference type="GO" id="GO:0003735">
    <property type="term" value="F:structural constituent of ribosome"/>
    <property type="evidence" value="ECO:0007669"/>
    <property type="project" value="InterPro"/>
</dbReference>
<dbReference type="GO" id="GO:0000049">
    <property type="term" value="F:tRNA binding"/>
    <property type="evidence" value="ECO:0007669"/>
    <property type="project" value="UniProtKB-UniRule"/>
</dbReference>
<dbReference type="GO" id="GO:0006412">
    <property type="term" value="P:translation"/>
    <property type="evidence" value="ECO:0007669"/>
    <property type="project" value="UniProtKB-UniRule"/>
</dbReference>
<dbReference type="FunFam" id="3.30.1440.10:FF:000001">
    <property type="entry name" value="50S ribosomal protein L5"/>
    <property type="match status" value="1"/>
</dbReference>
<dbReference type="Gene3D" id="3.30.1440.10">
    <property type="match status" value="1"/>
</dbReference>
<dbReference type="HAMAP" id="MF_01333_B">
    <property type="entry name" value="Ribosomal_uL5_B"/>
    <property type="match status" value="1"/>
</dbReference>
<dbReference type="InterPro" id="IPR002132">
    <property type="entry name" value="Ribosomal_uL5"/>
</dbReference>
<dbReference type="InterPro" id="IPR020930">
    <property type="entry name" value="Ribosomal_uL5_bac-type"/>
</dbReference>
<dbReference type="InterPro" id="IPR031309">
    <property type="entry name" value="Ribosomal_uL5_C"/>
</dbReference>
<dbReference type="InterPro" id="IPR020929">
    <property type="entry name" value="Ribosomal_uL5_CS"/>
</dbReference>
<dbReference type="InterPro" id="IPR022803">
    <property type="entry name" value="Ribosomal_uL5_dom_sf"/>
</dbReference>
<dbReference type="InterPro" id="IPR031310">
    <property type="entry name" value="Ribosomal_uL5_N"/>
</dbReference>
<dbReference type="NCBIfam" id="NF000585">
    <property type="entry name" value="PRK00010.1"/>
    <property type="match status" value="1"/>
</dbReference>
<dbReference type="PANTHER" id="PTHR11994">
    <property type="entry name" value="60S RIBOSOMAL PROTEIN L11-RELATED"/>
    <property type="match status" value="1"/>
</dbReference>
<dbReference type="Pfam" id="PF00281">
    <property type="entry name" value="Ribosomal_L5"/>
    <property type="match status" value="1"/>
</dbReference>
<dbReference type="Pfam" id="PF00673">
    <property type="entry name" value="Ribosomal_L5_C"/>
    <property type="match status" value="1"/>
</dbReference>
<dbReference type="PIRSF" id="PIRSF002161">
    <property type="entry name" value="Ribosomal_L5"/>
    <property type="match status" value="1"/>
</dbReference>
<dbReference type="SUPFAM" id="SSF55282">
    <property type="entry name" value="RL5-like"/>
    <property type="match status" value="1"/>
</dbReference>
<dbReference type="PROSITE" id="PS00358">
    <property type="entry name" value="RIBOSOMAL_L5"/>
    <property type="match status" value="1"/>
</dbReference>
<protein>
    <recommendedName>
        <fullName evidence="1">Large ribosomal subunit protein uL5</fullName>
    </recommendedName>
    <alternativeName>
        <fullName evidence="2">50S ribosomal protein L5</fullName>
    </alternativeName>
</protein>
<gene>
    <name evidence="1" type="primary">rplE</name>
    <name type="ordered locus">Rpal_3655</name>
</gene>
<accession>B3QBW8</accession>
<comment type="function">
    <text evidence="1">This is one of the proteins that bind and probably mediate the attachment of the 5S RNA into the large ribosomal subunit, where it forms part of the central protuberance. In the 70S ribosome it contacts protein S13 of the 30S subunit (bridge B1b), connecting the 2 subunits; this bridge is implicated in subunit movement. Contacts the P site tRNA; the 5S rRNA and some of its associated proteins might help stabilize positioning of ribosome-bound tRNAs.</text>
</comment>
<comment type="subunit">
    <text evidence="1">Part of the 50S ribosomal subunit; part of the 5S rRNA/L5/L18/L25 subcomplex. Contacts the 5S rRNA and the P site tRNA. Forms a bridge to the 30S subunit in the 70S ribosome.</text>
</comment>
<comment type="similarity">
    <text evidence="1">Belongs to the universal ribosomal protein uL5 family.</text>
</comment>
<organism>
    <name type="scientific">Rhodopseudomonas palustris (strain TIE-1)</name>
    <dbReference type="NCBI Taxonomy" id="395960"/>
    <lineage>
        <taxon>Bacteria</taxon>
        <taxon>Pseudomonadati</taxon>
        <taxon>Pseudomonadota</taxon>
        <taxon>Alphaproteobacteria</taxon>
        <taxon>Hyphomicrobiales</taxon>
        <taxon>Nitrobacteraceae</taxon>
        <taxon>Rhodopseudomonas</taxon>
    </lineage>
</organism>
<proteinExistence type="inferred from homology"/>
<feature type="chain" id="PRO_1000142439" description="Large ribosomal subunit protein uL5">
    <location>
        <begin position="1"/>
        <end position="185"/>
    </location>
</feature>